<keyword id="KW-0249">Electron transport</keyword>
<keyword id="KW-0472">Membrane</keyword>
<keyword id="KW-0496">Mitochondrion</keyword>
<keyword id="KW-0999">Mitochondrion inner membrane</keyword>
<keyword id="KW-0520">NAD</keyword>
<keyword id="KW-0679">Respiratory chain</keyword>
<keyword id="KW-1278">Translocase</keyword>
<keyword id="KW-0812">Transmembrane</keyword>
<keyword id="KW-1133">Transmembrane helix</keyword>
<keyword id="KW-0813">Transport</keyword>
<keyword id="KW-0830">Ubiquinone</keyword>
<name>NU1M_SQUAC</name>
<comment type="function">
    <text evidence="1">Core subunit of the mitochondrial membrane respiratory chain NADH dehydrogenase (Complex I) that is believed to belong to the minimal assembly required for catalysis. Complex I functions in the transfer of electrons from NADH to the respiratory chain. The immediate electron acceptor for the enzyme is believed to be ubiquinone (By similarity).</text>
</comment>
<comment type="catalytic activity">
    <reaction>
        <text>a ubiquinone + NADH + 5 H(+)(in) = a ubiquinol + NAD(+) + 4 H(+)(out)</text>
        <dbReference type="Rhea" id="RHEA:29091"/>
        <dbReference type="Rhea" id="RHEA-COMP:9565"/>
        <dbReference type="Rhea" id="RHEA-COMP:9566"/>
        <dbReference type="ChEBI" id="CHEBI:15378"/>
        <dbReference type="ChEBI" id="CHEBI:16389"/>
        <dbReference type="ChEBI" id="CHEBI:17976"/>
        <dbReference type="ChEBI" id="CHEBI:57540"/>
        <dbReference type="ChEBI" id="CHEBI:57945"/>
        <dbReference type="EC" id="7.1.1.2"/>
    </reaction>
</comment>
<comment type="subcellular location">
    <subcellularLocation>
        <location evidence="1">Mitochondrion inner membrane</location>
        <topology evidence="1">Multi-pass membrane protein</topology>
    </subcellularLocation>
</comment>
<comment type="similarity">
    <text evidence="3">Belongs to the complex I subunit 1 family.</text>
</comment>
<proteinExistence type="inferred from homology"/>
<sequence length="324" mass="36164">MLQHILLYLINPLAYIVPILLATAFLTLVERKILGYMQFRKGPNIVGPYGLLQPIADGVKLFIKEPVRPSTSSPFLFLATPTLALTLALLMWMPLPLPHAIINLNLGLLFILAVSSLTVYTILGSGWASNSKYALMGALRAVAQTISYEVSLGLILLSMIIFTGGFTLHTFNLTQETVWLLVPGWPLAMMWYISTLAETNRAPFDLTEGESELVSGFNVEYAGGSFALFFLAEYTNILMMNTLSVILFMGSSYDPTMPQISTFYLMMKATLLTLIFLWIRASYPRFRYDQLMHLVWKNFLPLTLALILWHAALPIATASLPPLT</sequence>
<feature type="chain" id="PRO_0000117480" description="NADH-ubiquinone oxidoreductase chain 1">
    <location>
        <begin position="1"/>
        <end position="324"/>
    </location>
</feature>
<feature type="transmembrane region" description="Helical" evidence="2">
    <location>
        <begin position="5"/>
        <end position="25"/>
    </location>
</feature>
<feature type="transmembrane region" description="Helical" evidence="2">
    <location>
        <begin position="75"/>
        <end position="95"/>
    </location>
</feature>
<feature type="transmembrane region" description="Helical" evidence="2">
    <location>
        <begin position="106"/>
        <end position="126"/>
    </location>
</feature>
<feature type="transmembrane region" description="Helical" evidence="2">
    <location>
        <begin position="146"/>
        <end position="166"/>
    </location>
</feature>
<feature type="transmembrane region" description="Helical" evidence="2">
    <location>
        <begin position="177"/>
        <end position="197"/>
    </location>
</feature>
<feature type="transmembrane region" description="Helical" evidence="2">
    <location>
        <begin position="228"/>
        <end position="248"/>
    </location>
</feature>
<feature type="transmembrane region" description="Helical" evidence="2">
    <location>
        <begin position="259"/>
        <end position="279"/>
    </location>
</feature>
<feature type="transmembrane region" description="Helical" evidence="2">
    <location>
        <begin position="299"/>
        <end position="319"/>
    </location>
</feature>
<evidence type="ECO:0000250" key="1"/>
<evidence type="ECO:0000255" key="2"/>
<evidence type="ECO:0000305" key="3"/>
<organism>
    <name type="scientific">Squalus acanthias</name>
    <name type="common">Spiny dogfish</name>
    <dbReference type="NCBI Taxonomy" id="7797"/>
    <lineage>
        <taxon>Eukaryota</taxon>
        <taxon>Metazoa</taxon>
        <taxon>Chordata</taxon>
        <taxon>Craniata</taxon>
        <taxon>Vertebrata</taxon>
        <taxon>Chondrichthyes</taxon>
        <taxon>Elasmobranchii</taxon>
        <taxon>Squalomorphii</taxon>
        <taxon>Squaliformes</taxon>
        <taxon>Squalidae</taxon>
        <taxon>Squalus</taxon>
    </lineage>
</organism>
<dbReference type="EC" id="7.1.1.2"/>
<dbReference type="EMBL" id="Y18134">
    <property type="protein sequence ID" value="CAA77049.1"/>
    <property type="molecule type" value="Genomic_DNA"/>
</dbReference>
<dbReference type="PIR" id="T11534">
    <property type="entry name" value="T11534"/>
</dbReference>
<dbReference type="RefSeq" id="NP_008523.1">
    <property type="nucleotide sequence ID" value="NC_002012.1"/>
</dbReference>
<dbReference type="SMR" id="Q9ZZ54"/>
<dbReference type="GeneID" id="808377"/>
<dbReference type="CTD" id="4535"/>
<dbReference type="GO" id="GO:0005743">
    <property type="term" value="C:mitochondrial inner membrane"/>
    <property type="evidence" value="ECO:0007669"/>
    <property type="project" value="UniProtKB-SubCell"/>
</dbReference>
<dbReference type="GO" id="GO:0008137">
    <property type="term" value="F:NADH dehydrogenase (ubiquinone) activity"/>
    <property type="evidence" value="ECO:0007669"/>
    <property type="project" value="UniProtKB-EC"/>
</dbReference>
<dbReference type="GO" id="GO:0009060">
    <property type="term" value="P:aerobic respiration"/>
    <property type="evidence" value="ECO:0007669"/>
    <property type="project" value="TreeGrafter"/>
</dbReference>
<dbReference type="HAMAP" id="MF_01350">
    <property type="entry name" value="NDH1_NuoH"/>
    <property type="match status" value="1"/>
</dbReference>
<dbReference type="InterPro" id="IPR001694">
    <property type="entry name" value="NADH_UbQ_OxRdtase_su1/FPO"/>
</dbReference>
<dbReference type="InterPro" id="IPR018086">
    <property type="entry name" value="NADH_UbQ_OxRdtase_su1_CS"/>
</dbReference>
<dbReference type="PANTHER" id="PTHR11432">
    <property type="entry name" value="NADH DEHYDROGENASE SUBUNIT 1"/>
    <property type="match status" value="1"/>
</dbReference>
<dbReference type="PANTHER" id="PTHR11432:SF3">
    <property type="entry name" value="NADH-UBIQUINONE OXIDOREDUCTASE CHAIN 1"/>
    <property type="match status" value="1"/>
</dbReference>
<dbReference type="Pfam" id="PF00146">
    <property type="entry name" value="NADHdh"/>
    <property type="match status" value="1"/>
</dbReference>
<dbReference type="PROSITE" id="PS00667">
    <property type="entry name" value="COMPLEX1_ND1_1"/>
    <property type="match status" value="1"/>
</dbReference>
<dbReference type="PROSITE" id="PS00668">
    <property type="entry name" value="COMPLEX1_ND1_2"/>
    <property type="match status" value="1"/>
</dbReference>
<protein>
    <recommendedName>
        <fullName>NADH-ubiquinone oxidoreductase chain 1</fullName>
        <ecNumber>7.1.1.2</ecNumber>
    </recommendedName>
    <alternativeName>
        <fullName>NADH dehydrogenase subunit 1</fullName>
    </alternativeName>
</protein>
<geneLocation type="mitochondrion"/>
<reference key="1">
    <citation type="journal article" date="1999" name="J. Mol. Evol.">
        <title>Phylogenetic studies of complete mitochondrial DNA molecules place cartilaginous fishes within the tree of bony fishes.</title>
        <authorList>
            <person name="Rasmussen A.S."/>
            <person name="Arnason U."/>
        </authorList>
    </citation>
    <scope>NUCLEOTIDE SEQUENCE [GENOMIC DNA]</scope>
</reference>
<accession>Q9ZZ54</accession>
<gene>
    <name type="primary">MT-ND1</name>
    <name type="synonym">MTND1</name>
    <name type="synonym">NADH1</name>
    <name type="synonym">ND1</name>
</gene>